<comment type="function">
    <text evidence="4">Catalyzes the 3-beta-hydroxylation of 2S-flavanones to 2R,3R-dihydroflavonols which are intermediates in the biosynthesis of flavonols, anthocyanidins, catechins and proanthocyanidins in plants. Converts (2S)-eriodictyol to (+)-taxifolin and (2S)-naringenin to (+)-(2R/3R)-dihydrokaempferol in vitro.</text>
</comment>
<comment type="catalytic activity">
    <reaction evidence="4">
        <text>a (2S)-flavan-4-one + 2-oxoglutarate + O2 = a (2R,3R)-dihydroflavonol + succinate + CO2</text>
        <dbReference type="Rhea" id="RHEA:18621"/>
        <dbReference type="ChEBI" id="CHEBI:15379"/>
        <dbReference type="ChEBI" id="CHEBI:16526"/>
        <dbReference type="ChEBI" id="CHEBI:16810"/>
        <dbReference type="ChEBI" id="CHEBI:30031"/>
        <dbReference type="ChEBI" id="CHEBI:138188"/>
        <dbReference type="ChEBI" id="CHEBI:140377"/>
        <dbReference type="EC" id="1.14.11.9"/>
    </reaction>
</comment>
<comment type="cofactor">
    <cofactor evidence="2">
        <name>Fe(2+)</name>
        <dbReference type="ChEBI" id="CHEBI:29033"/>
    </cofactor>
    <text evidence="2">Binds 1 Fe(2+) ion per subunit.</text>
</comment>
<comment type="cofactor">
    <cofactor evidence="1">
        <name>L-ascorbate</name>
        <dbReference type="ChEBI" id="CHEBI:38290"/>
    </cofactor>
</comment>
<comment type="biophysicochemical properties">
    <kinetics>
        <KM evidence="4">57.8 uM for S-eriodictyol</KM>
        <Vmax evidence="4">3.1 umol/sec/mg enzyme toward S-eriodictyol</Vmax>
    </kinetics>
</comment>
<comment type="pathway">
    <text evidence="6">Secondary metabolite biosynthesis; flavonoid biosynthesis.</text>
</comment>
<comment type="tissue specificity">
    <text evidence="4">Expressed at low levels in roots, leaves, stems and seeds.</text>
</comment>
<comment type="similarity">
    <text evidence="6">Belongs to the iron/ascorbate-dependent oxidoreductase family.</text>
</comment>
<comment type="sequence caution" evidence="6">
    <conflict type="erroneous gene model prediction">
        <sequence resource="EMBL-CDS" id="BAH92861"/>
    </conflict>
</comment>
<comment type="sequence caution" evidence="6">
    <conflict type="erroneous gene model prediction">
        <sequence resource="EMBL-CDS" id="BAS91470"/>
    </conflict>
</comment>
<name>FL3H1_ORYSJ</name>
<keyword id="KW-0223">Dioxygenase</keyword>
<keyword id="KW-0284">Flavonoid biosynthesis</keyword>
<keyword id="KW-0408">Iron</keyword>
<keyword id="KW-0479">Metal-binding</keyword>
<keyword id="KW-0560">Oxidoreductase</keyword>
<keyword id="KW-1185">Reference proteome</keyword>
<keyword id="KW-0847">Vitamin C</keyword>
<organism>
    <name type="scientific">Oryza sativa subsp. japonica</name>
    <name type="common">Rice</name>
    <dbReference type="NCBI Taxonomy" id="39947"/>
    <lineage>
        <taxon>Eukaryota</taxon>
        <taxon>Viridiplantae</taxon>
        <taxon>Streptophyta</taxon>
        <taxon>Embryophyta</taxon>
        <taxon>Tracheophyta</taxon>
        <taxon>Spermatophyta</taxon>
        <taxon>Magnoliopsida</taxon>
        <taxon>Liliopsida</taxon>
        <taxon>Poales</taxon>
        <taxon>Poaceae</taxon>
        <taxon>BOP clade</taxon>
        <taxon>Oryzoideae</taxon>
        <taxon>Oryzeae</taxon>
        <taxon>Oryzinae</taxon>
        <taxon>Oryza</taxon>
        <taxon>Oryza sativa</taxon>
    </lineage>
</organism>
<sequence>MAPVATTFLPTASNEATLRPSFVRDEDERPRVAYNQFSDAVPVISLQGIDEAARAEIRARVAGACEEWGIFQVVDHGVDAGLVADMARLARDFFALPPEDKLRFDMSGGKKGGFIVSSHLQGEAVKDWREIVTYFSYPVKSRDYSRWPDKPAGWRAVVEQYSERLMGLACKLLGVLSEAMGLDTNALADACVDMDQKVVVNFYPKCPQPDLTLGLKRHTDPGTITLLLQDLVGGLQATRDAGKTWITVQPIPGSFVVNLGDHAHYLSNGRFKNADHQAVVNSDCCRLSIATFQNPAPDAMVYPLAVRDGEEPILEEPITFAEMYRRKMARDLELAKLKKKAKEQRQLQQAALPPPPPTQVAAELAAQKPKSLDEILA</sequence>
<dbReference type="EC" id="1.14.11.9" evidence="4"/>
<dbReference type="EMBL" id="AL606999">
    <property type="protein sequence ID" value="CAE04838.2"/>
    <property type="molecule type" value="Genomic_DNA"/>
</dbReference>
<dbReference type="EMBL" id="AP008210">
    <property type="protein sequence ID" value="BAH92861.1"/>
    <property type="status" value="ALT_SEQ"/>
    <property type="molecule type" value="Genomic_DNA"/>
</dbReference>
<dbReference type="EMBL" id="AP014960">
    <property type="protein sequence ID" value="BAS91470.1"/>
    <property type="status" value="ALT_SEQ"/>
    <property type="molecule type" value="Genomic_DNA"/>
</dbReference>
<dbReference type="SMR" id="Q7XM21"/>
<dbReference type="FunCoup" id="Q7XM21">
    <property type="interactions" value="23"/>
</dbReference>
<dbReference type="STRING" id="39947.Q7XM21"/>
<dbReference type="PaxDb" id="39947-Q7XM21"/>
<dbReference type="EnsemblPlants" id="Os04t0662600-01">
    <property type="protein sequence ID" value="Os04t0662600-01"/>
    <property type="gene ID" value="Os04g0662600"/>
</dbReference>
<dbReference type="Gramene" id="Os04t0662600-01">
    <property type="protein sequence ID" value="Os04t0662600-01"/>
    <property type="gene ID" value="Os04g0662600"/>
</dbReference>
<dbReference type="KEGG" id="dosa:Os04g0662600"/>
<dbReference type="KEGG" id="osa:9270463"/>
<dbReference type="eggNOG" id="KOG0143">
    <property type="taxonomic scope" value="Eukaryota"/>
</dbReference>
<dbReference type="InParanoid" id="Q7XM21"/>
<dbReference type="OrthoDB" id="288590at2759"/>
<dbReference type="PlantReactome" id="R-OSA-1119322">
    <property type="pathway name" value="Leucodelphinidin biosynthesis"/>
</dbReference>
<dbReference type="PlantReactome" id="R-OSA-1119415">
    <property type="pathway name" value="Leucopelargonidin and leucocyanidin biosynthesis"/>
</dbReference>
<dbReference type="PlantReactome" id="R-OSA-1119531">
    <property type="pathway name" value="Flavonoid biosynthesis"/>
</dbReference>
<dbReference type="UniPathway" id="UPA00154"/>
<dbReference type="Proteomes" id="UP000000763">
    <property type="component" value="Chromosome 4"/>
</dbReference>
<dbReference type="Proteomes" id="UP000059680">
    <property type="component" value="Chromosome 4"/>
</dbReference>
<dbReference type="GO" id="GO:0016706">
    <property type="term" value="F:2-oxoglutarate-dependent dioxygenase activity"/>
    <property type="evidence" value="ECO:0000318"/>
    <property type="project" value="GO_Central"/>
</dbReference>
<dbReference type="GO" id="GO:0045486">
    <property type="term" value="F:flavanone 3-dioxygenase activity"/>
    <property type="evidence" value="ECO:0007669"/>
    <property type="project" value="UniProtKB-EC"/>
</dbReference>
<dbReference type="GO" id="GO:0031418">
    <property type="term" value="F:L-ascorbic acid binding"/>
    <property type="evidence" value="ECO:0007669"/>
    <property type="project" value="UniProtKB-KW"/>
</dbReference>
<dbReference type="GO" id="GO:0046872">
    <property type="term" value="F:metal ion binding"/>
    <property type="evidence" value="ECO:0007669"/>
    <property type="project" value="UniProtKB-KW"/>
</dbReference>
<dbReference type="GO" id="GO:0009813">
    <property type="term" value="P:flavonoid biosynthetic process"/>
    <property type="evidence" value="ECO:0007669"/>
    <property type="project" value="UniProtKB-UniPathway"/>
</dbReference>
<dbReference type="GO" id="GO:0010224">
    <property type="term" value="P:response to UV-B"/>
    <property type="evidence" value="ECO:0007669"/>
    <property type="project" value="EnsemblPlants"/>
</dbReference>
<dbReference type="FunFam" id="2.60.120.330:FF:000016">
    <property type="entry name" value="Naringenin,2-oxoglutarate 3-dioxygenase"/>
    <property type="match status" value="1"/>
</dbReference>
<dbReference type="Gene3D" id="2.60.120.330">
    <property type="entry name" value="B-lactam Antibiotic, Isopenicillin N Synthase, Chain"/>
    <property type="match status" value="1"/>
</dbReference>
<dbReference type="InterPro" id="IPR026992">
    <property type="entry name" value="DIOX_N"/>
</dbReference>
<dbReference type="InterPro" id="IPR044861">
    <property type="entry name" value="IPNS-like_FE2OG_OXY"/>
</dbReference>
<dbReference type="InterPro" id="IPR027443">
    <property type="entry name" value="IPNS-like_sf"/>
</dbReference>
<dbReference type="InterPro" id="IPR005123">
    <property type="entry name" value="Oxoglu/Fe-dep_dioxygenase_dom"/>
</dbReference>
<dbReference type="InterPro" id="IPR050295">
    <property type="entry name" value="Plant_2OG-oxidoreductases"/>
</dbReference>
<dbReference type="PANTHER" id="PTHR47991">
    <property type="entry name" value="OXOGLUTARATE/IRON-DEPENDENT DIOXYGENASE"/>
    <property type="match status" value="1"/>
</dbReference>
<dbReference type="Pfam" id="PF03171">
    <property type="entry name" value="2OG-FeII_Oxy"/>
    <property type="match status" value="1"/>
</dbReference>
<dbReference type="Pfam" id="PF14226">
    <property type="entry name" value="DIOX_N"/>
    <property type="match status" value="1"/>
</dbReference>
<dbReference type="SUPFAM" id="SSF51197">
    <property type="entry name" value="Clavaminate synthase-like"/>
    <property type="match status" value="1"/>
</dbReference>
<dbReference type="PROSITE" id="PS51471">
    <property type="entry name" value="FE2OG_OXY"/>
    <property type="match status" value="1"/>
</dbReference>
<evidence type="ECO:0000250" key="1"/>
<evidence type="ECO:0000255" key="2">
    <source>
        <dbReference type="PROSITE-ProRule" id="PRU00805"/>
    </source>
</evidence>
<evidence type="ECO:0000256" key="3">
    <source>
        <dbReference type="SAM" id="MobiDB-lite"/>
    </source>
</evidence>
<evidence type="ECO:0000269" key="4">
    <source>
    </source>
</evidence>
<evidence type="ECO:0000303" key="5">
    <source>
    </source>
</evidence>
<evidence type="ECO:0000305" key="6"/>
<evidence type="ECO:0000312" key="7">
    <source>
        <dbReference type="EMBL" id="BAH92861.1"/>
    </source>
</evidence>
<evidence type="ECO:0000312" key="8">
    <source>
        <dbReference type="EMBL" id="CAE04838.2"/>
    </source>
</evidence>
<reference key="1">
    <citation type="journal article" date="2002" name="Nature">
        <title>Sequence and analysis of rice chromosome 4.</title>
        <authorList>
            <person name="Feng Q."/>
            <person name="Zhang Y."/>
            <person name="Hao P."/>
            <person name="Wang S."/>
            <person name="Fu G."/>
            <person name="Huang Y."/>
            <person name="Li Y."/>
            <person name="Zhu J."/>
            <person name="Liu Y."/>
            <person name="Hu X."/>
            <person name="Jia P."/>
            <person name="Zhang Y."/>
            <person name="Zhao Q."/>
            <person name="Ying K."/>
            <person name="Yu S."/>
            <person name="Tang Y."/>
            <person name="Weng Q."/>
            <person name="Zhang L."/>
            <person name="Lu Y."/>
            <person name="Mu J."/>
            <person name="Lu Y."/>
            <person name="Zhang L.S."/>
            <person name="Yu Z."/>
            <person name="Fan D."/>
            <person name="Liu X."/>
            <person name="Lu T."/>
            <person name="Li C."/>
            <person name="Wu Y."/>
            <person name="Sun T."/>
            <person name="Lei H."/>
            <person name="Li T."/>
            <person name="Hu H."/>
            <person name="Guan J."/>
            <person name="Wu M."/>
            <person name="Zhang R."/>
            <person name="Zhou B."/>
            <person name="Chen Z."/>
            <person name="Chen L."/>
            <person name="Jin Z."/>
            <person name="Wang R."/>
            <person name="Yin H."/>
            <person name="Cai Z."/>
            <person name="Ren S."/>
            <person name="Lv G."/>
            <person name="Gu W."/>
            <person name="Zhu G."/>
            <person name="Tu Y."/>
            <person name="Jia J."/>
            <person name="Zhang Y."/>
            <person name="Chen J."/>
            <person name="Kang H."/>
            <person name="Chen X."/>
            <person name="Shao C."/>
            <person name="Sun Y."/>
            <person name="Hu Q."/>
            <person name="Zhang X."/>
            <person name="Zhang W."/>
            <person name="Wang L."/>
            <person name="Ding C."/>
            <person name="Sheng H."/>
            <person name="Gu J."/>
            <person name="Chen S."/>
            <person name="Ni L."/>
            <person name="Zhu F."/>
            <person name="Chen W."/>
            <person name="Lan L."/>
            <person name="Lai Y."/>
            <person name="Cheng Z."/>
            <person name="Gu M."/>
            <person name="Jiang J."/>
            <person name="Li J."/>
            <person name="Hong G."/>
            <person name="Xue Y."/>
            <person name="Han B."/>
        </authorList>
    </citation>
    <scope>NUCLEOTIDE SEQUENCE [LARGE SCALE GENOMIC DNA]</scope>
    <source>
        <strain>cv. Nipponbare</strain>
    </source>
</reference>
<reference key="2">
    <citation type="journal article" date="2005" name="Nature">
        <title>The map-based sequence of the rice genome.</title>
        <authorList>
            <consortium name="International rice genome sequencing project (IRGSP)"/>
        </authorList>
    </citation>
    <scope>NUCLEOTIDE SEQUENCE [LARGE SCALE GENOMIC DNA]</scope>
    <source>
        <strain>cv. Nipponbare</strain>
    </source>
</reference>
<reference key="3">
    <citation type="journal article" date="2008" name="Nucleic Acids Res.">
        <title>The rice annotation project database (RAP-DB): 2008 update.</title>
        <authorList>
            <consortium name="The rice annotation project (RAP)"/>
        </authorList>
    </citation>
    <scope>GENOME REANNOTATION</scope>
    <source>
        <strain>cv. Nipponbare</strain>
    </source>
</reference>
<reference key="4">
    <citation type="journal article" date="2013" name="Rice">
        <title>Improvement of the Oryza sativa Nipponbare reference genome using next generation sequence and optical map data.</title>
        <authorList>
            <person name="Kawahara Y."/>
            <person name="de la Bastide M."/>
            <person name="Hamilton J.P."/>
            <person name="Kanamori H."/>
            <person name="McCombie W.R."/>
            <person name="Ouyang S."/>
            <person name="Schwartz D.C."/>
            <person name="Tanaka T."/>
            <person name="Wu J."/>
            <person name="Zhou S."/>
            <person name="Childs K.L."/>
            <person name="Davidson R.M."/>
            <person name="Lin H."/>
            <person name="Quesada-Ocampo L."/>
            <person name="Vaillancourt B."/>
            <person name="Sakai H."/>
            <person name="Lee S.S."/>
            <person name="Kim J."/>
            <person name="Numa H."/>
            <person name="Itoh T."/>
            <person name="Buell C.R."/>
            <person name="Matsumoto T."/>
        </authorList>
    </citation>
    <scope>GENOME REANNOTATION</scope>
    <source>
        <strain>cv. Nipponbare</strain>
    </source>
</reference>
<reference key="5">
    <citation type="journal article" date="2008" name="Mol. Cells">
        <title>Flavanone 3beta-hydroxylases from rice: key enzymes for favonol and anthocyanin biosynthesis.</title>
        <authorList>
            <person name="Kim J.H."/>
            <person name="Lee Y.J."/>
            <person name="Kim B.G."/>
            <person name="Lim Y."/>
            <person name="Ahn J.H."/>
        </authorList>
    </citation>
    <scope>FUNCTION</scope>
    <scope>CATALYTIC ACTIVITY</scope>
    <scope>BIOPHYSICOCHEMICAL PROPERTIES</scope>
    <scope>TISSUE SPECIFICITY</scope>
</reference>
<protein>
    <recommendedName>
        <fullName evidence="6">Flavanone 3-dioxygenase 1</fullName>
        <ecNumber evidence="4">1.14.11.9</ecNumber>
    </recommendedName>
    <alternativeName>
        <fullName evidence="6">Flavanone 3-beta-hydroxylase 1</fullName>
    </alternativeName>
    <alternativeName>
        <fullName evidence="5">Flavanone 3-hydroxylase 1</fullName>
        <shortName evidence="5">OsF3H-1</shortName>
    </alternativeName>
</protein>
<feature type="chain" id="PRO_0000440772" description="Flavanone 3-dioxygenase 1">
    <location>
        <begin position="1"/>
        <end position="377"/>
    </location>
</feature>
<feature type="domain" description="Fe2OG dioxygenase" evidence="2">
    <location>
        <begin position="191"/>
        <end position="295"/>
    </location>
</feature>
<feature type="region of interest" description="Disordered" evidence="3">
    <location>
        <begin position="339"/>
        <end position="377"/>
    </location>
</feature>
<feature type="binding site" evidence="2">
    <location>
        <position position="218"/>
    </location>
    <ligand>
        <name>Fe cation</name>
        <dbReference type="ChEBI" id="CHEBI:24875"/>
    </ligand>
</feature>
<feature type="binding site" evidence="2">
    <location>
        <position position="220"/>
    </location>
    <ligand>
        <name>Fe cation</name>
        <dbReference type="ChEBI" id="CHEBI:24875"/>
    </ligand>
</feature>
<feature type="binding site" evidence="2">
    <location>
        <position position="276"/>
    </location>
    <ligand>
        <name>Fe cation</name>
        <dbReference type="ChEBI" id="CHEBI:24875"/>
    </ligand>
</feature>
<feature type="binding site" evidence="2">
    <location>
        <position position="286"/>
    </location>
    <ligand>
        <name>2-oxoglutarate</name>
        <dbReference type="ChEBI" id="CHEBI:16810"/>
    </ligand>
</feature>
<proteinExistence type="evidence at protein level"/>
<accession>Q7XM21</accession>
<accession>A0A0P0WFY8</accession>
<accession>C7J0Y2</accession>
<gene>
    <name evidence="5" type="primary">F3H-1</name>
    <name evidence="7" type="ordered locus">Os04g0662600</name>
    <name evidence="6" type="ordered locus">LOC_Os04g56700</name>
    <name evidence="8" type="ORF">OSJNBa0084K01.10</name>
</gene>